<comment type="function">
    <text evidence="2">Involved in the polymorphic O-glycosylation of the serine-rich repeat protein PsrP. Catalyzes the fourth step in glycosylation of PsrP in this bacteria. Can transfer the sugar from UDP-galactose to the terminal sugar moiety of PsrP-GlcNAc-Glc-Gal or of PsrP-GlcNAc-Glc-Glc (using truncated substrates with the PsrP SSR1 domain) (PubMed:28246170). Has hydrolytic activity against UDP-galactose and to a lesser extent against UDP-glucose (PubMed:28246170).</text>
</comment>
<comment type="pathway">
    <text evidence="2">Protein modification; protein glycosylation.</text>
</comment>
<comment type="miscellaneous">
    <text evidence="3 4 6">Encoded in RD10, a pathogenicity island with an atypical GC content that is associated with invasive pneumococcal disease. Pathogenicity islands account for greater than half the genomic diversity observed between isolates (PubMed:11463916, PubMed:16861665). The main function of this island seems to be correct synthesis and export of pneumococcal serine-rich repeat protein PsrP (Probable).</text>
</comment>
<comment type="similarity">
    <text evidence="6">In the N-terminal section; belongs to the glycosyltransferase 2 family.</text>
</comment>
<comment type="similarity">
    <text evidence="6">In the central section; belongs to the glycosyltransferase 8 family.</text>
</comment>
<comment type="caution">
    <text evidence="6">This gene name has also been given to serine hydroxymethyltransferase (AC Q97R16) in this organism.</text>
</comment>
<reference key="1">
    <citation type="journal article" date="2001" name="Science">
        <title>Complete genome sequence of a virulent isolate of Streptococcus pneumoniae.</title>
        <authorList>
            <person name="Tettelin H."/>
            <person name="Nelson K.E."/>
            <person name="Paulsen I.T."/>
            <person name="Eisen J.A."/>
            <person name="Read T.D."/>
            <person name="Peterson S.N."/>
            <person name="Heidelberg J.F."/>
            <person name="DeBoy R.T."/>
            <person name="Haft D.H."/>
            <person name="Dodson R.J."/>
            <person name="Durkin A.S."/>
            <person name="Gwinn M.L."/>
            <person name="Kolonay J.F."/>
            <person name="Nelson W.C."/>
            <person name="Peterson J.D."/>
            <person name="Umayam L.A."/>
            <person name="White O."/>
            <person name="Salzberg S.L."/>
            <person name="Lewis M.R."/>
            <person name="Radune D."/>
            <person name="Holtzapple E.K."/>
            <person name="Khouri H.M."/>
            <person name="Wolf A.M."/>
            <person name="Utterback T.R."/>
            <person name="Hansen C.L."/>
            <person name="McDonald L.A."/>
            <person name="Feldblyum T.V."/>
            <person name="Angiuoli S.V."/>
            <person name="Dickinson T."/>
            <person name="Hickey E.K."/>
            <person name="Holt I.E."/>
            <person name="Loftus B.J."/>
            <person name="Yang F."/>
            <person name="Smith H.O."/>
            <person name="Venter J.C."/>
            <person name="Dougherty B.A."/>
            <person name="Morrison D.A."/>
            <person name="Hollingshead S.K."/>
            <person name="Fraser C.M."/>
        </authorList>
    </citation>
    <scope>NUCLEOTIDE SEQUENCE [LARGE SCALE GENOMIC DNA]</scope>
    <source>
        <strain>ATCC BAA-334 / TIGR4</strain>
    </source>
</reference>
<reference key="2">
    <citation type="journal article" date="2006" name="Infect. Immun.">
        <title>Identification of a candidate Streptococcus pneumoniae core genome and regions of diversity correlated with invasive pneumococcal disease.</title>
        <authorList>
            <person name="Obert C."/>
            <person name="Sublett J."/>
            <person name="Kaushal D."/>
            <person name="Hinojosa E."/>
            <person name="Barton T."/>
            <person name="Tuomanen E.I."/>
            <person name="Orihuela C.J."/>
        </authorList>
    </citation>
    <scope>DISCUSSION OF SEQUENCE</scope>
    <source>
        <strain>ATCC BAA-334 / TIGR4</strain>
    </source>
</reference>
<reference key="3">
    <citation type="journal article" date="2017" name="J. Biol. Chem.">
        <title>Defining the enzymatic pathway for polymorphic O-glycosylation of the pneumococcal serine-rich repeat protein PsrP.</title>
        <authorList>
            <person name="Jiang Y.L."/>
            <person name="Jin H."/>
            <person name="Yang H.B."/>
            <person name="Zhao R.L."/>
            <person name="Wang S."/>
            <person name="Chen Y."/>
            <person name="Zhou C.Z."/>
        </authorList>
    </citation>
    <scope>FUNCTION</scope>
    <scope>PATHWAY</scope>
    <scope>DOMAIN</scope>
    <source>
        <strain>ATCC BAA-334 / TIGR4</strain>
    </source>
</reference>
<name>GLYAT_STRPN</name>
<feature type="chain" id="PRO_0000447025" description="Glycosyltransferase GlyA">
    <location>
        <begin position="1"/>
        <end position="696"/>
    </location>
</feature>
<feature type="region of interest" description="GT2 domain" evidence="7">
    <location>
        <begin position="1"/>
        <end position="301"/>
    </location>
</feature>
<feature type="region of interest" description="GT8 domain" evidence="7">
    <location>
        <begin position="302"/>
        <end position="556"/>
    </location>
</feature>
<feature type="binding site" evidence="1">
    <location>
        <begin position="308"/>
        <end position="313"/>
    </location>
    <ligand>
        <name>UDP</name>
        <dbReference type="ChEBI" id="CHEBI:58223"/>
    </ligand>
</feature>
<feature type="binding site" evidence="1">
    <location>
        <begin position="399"/>
        <end position="400"/>
    </location>
    <ligand>
        <name>UDP</name>
        <dbReference type="ChEBI" id="CHEBI:58223"/>
    </ligand>
</feature>
<feature type="binding site" evidence="1">
    <location>
        <position position="399"/>
    </location>
    <ligand>
        <name>Mn(2+)</name>
        <dbReference type="ChEBI" id="CHEBI:29035"/>
    </ligand>
</feature>
<feature type="binding site" evidence="1">
    <location>
        <position position="401"/>
    </location>
    <ligand>
        <name>Mn(2+)</name>
        <dbReference type="ChEBI" id="CHEBI:29035"/>
    </ligand>
</feature>
<feature type="binding site" evidence="1">
    <location>
        <begin position="518"/>
        <end position="524"/>
    </location>
    <ligand>
        <name>UDP</name>
        <dbReference type="ChEBI" id="CHEBI:58223"/>
    </ligand>
</feature>
<feature type="binding site" evidence="1">
    <location>
        <position position="518"/>
    </location>
    <ligand>
        <name>Mn(2+)</name>
        <dbReference type="ChEBI" id="CHEBI:29035"/>
    </ligand>
</feature>
<protein>
    <recommendedName>
        <fullName evidence="5">Glycosyltransferase GlyA</fullName>
    </recommendedName>
    <alternativeName>
        <fullName evidence="6">PsrP glycosyltransferase GlyA</fullName>
    </alternativeName>
</protein>
<dbReference type="EMBL" id="AE005672">
    <property type="protein sequence ID" value="AAK75845.1"/>
    <property type="molecule type" value="Genomic_DNA"/>
</dbReference>
<dbReference type="SMR" id="A0A0H2URH7"/>
<dbReference type="PaxDb" id="170187-SP_1771"/>
<dbReference type="EnsemblBacteria" id="AAK75845">
    <property type="protein sequence ID" value="AAK75845"/>
    <property type="gene ID" value="SP_1771"/>
</dbReference>
<dbReference type="KEGG" id="spn:SP_1771"/>
<dbReference type="eggNOG" id="COG1216">
    <property type="taxonomic scope" value="Bacteria"/>
</dbReference>
<dbReference type="eggNOG" id="COG1442">
    <property type="taxonomic scope" value="Bacteria"/>
</dbReference>
<dbReference type="PhylomeDB" id="A0A0H2URH7"/>
<dbReference type="UniPathway" id="UPA00378"/>
<dbReference type="Proteomes" id="UP000000585">
    <property type="component" value="Chromosome"/>
</dbReference>
<dbReference type="GO" id="GO:0016757">
    <property type="term" value="F:glycosyltransferase activity"/>
    <property type="evidence" value="ECO:0007669"/>
    <property type="project" value="UniProtKB-KW"/>
</dbReference>
<dbReference type="GO" id="GO:0046872">
    <property type="term" value="F:metal ion binding"/>
    <property type="evidence" value="ECO:0007669"/>
    <property type="project" value="UniProtKB-KW"/>
</dbReference>
<dbReference type="GO" id="GO:0000166">
    <property type="term" value="F:nucleotide binding"/>
    <property type="evidence" value="ECO:0007669"/>
    <property type="project" value="UniProtKB-KW"/>
</dbReference>
<dbReference type="GO" id="GO:0006486">
    <property type="term" value="P:protein glycosylation"/>
    <property type="evidence" value="ECO:0007669"/>
    <property type="project" value="UniProtKB-UniPathway"/>
</dbReference>
<dbReference type="CDD" id="cd00761">
    <property type="entry name" value="Glyco_tranf_GTA_type"/>
    <property type="match status" value="1"/>
</dbReference>
<dbReference type="CDD" id="cd04194">
    <property type="entry name" value="GT8_A4GalT_like"/>
    <property type="match status" value="1"/>
</dbReference>
<dbReference type="Gene3D" id="3.90.550.10">
    <property type="entry name" value="Spore Coat Polysaccharide Biosynthesis Protein SpsA, Chain A"/>
    <property type="match status" value="2"/>
</dbReference>
<dbReference type="InterPro" id="IPR001173">
    <property type="entry name" value="Glyco_trans_2-like"/>
</dbReference>
<dbReference type="InterPro" id="IPR002495">
    <property type="entry name" value="Glyco_trans_8"/>
</dbReference>
<dbReference type="InterPro" id="IPR029044">
    <property type="entry name" value="Nucleotide-diphossugar_trans"/>
</dbReference>
<dbReference type="PANTHER" id="PTHR22916">
    <property type="entry name" value="GLYCOSYLTRANSFERASE"/>
    <property type="match status" value="1"/>
</dbReference>
<dbReference type="PANTHER" id="PTHR22916:SF51">
    <property type="entry name" value="GLYCOSYLTRANSFERASE EPSH-RELATED"/>
    <property type="match status" value="1"/>
</dbReference>
<dbReference type="Pfam" id="PF01501">
    <property type="entry name" value="Glyco_transf_8"/>
    <property type="match status" value="1"/>
</dbReference>
<dbReference type="Pfam" id="PF00535">
    <property type="entry name" value="Glycos_transf_2"/>
    <property type="match status" value="1"/>
</dbReference>
<dbReference type="SUPFAM" id="SSF53448">
    <property type="entry name" value="Nucleotide-diphospho-sugar transferases"/>
    <property type="match status" value="2"/>
</dbReference>
<sequence length="696" mass="81336">MLVDDKITVIVPVYNVENYLRKCLDSIITQTYKNIEIVVVNDGSTDASGEICKEFSEMDHRILYIEQENAGLSAARNTGLNNMSGNYVTFVDSDDWIEQDYVETLYKKIVEYQADIAVGNYYSFNESEGMFYFHILGDSYYEKVYDNVSIFENLYETQEMKSFALISAWGKLYKARLFEQLRFDIGKLGEDGYLNQKVYLLSEKVIYLNKSLYAYRIRKGSLSRVWTEKWMHALVDAMSERITLLANMGYPLEKHLAVYRQMLEVSLANGQASGLSDTATYKEFEMKQRLLNQLSRQEESEKKAIVLAANYGYVDQVLTTIKSICYHNRSIRFYLIHSDFPNEWIKQLNKRLEKFDSEIINCRVTSEQISCYKSDISYTVFLRYFIADFVQEDKALYLDCDLVVTKNLDDLFATDLQDYPLAAVRDFGGRAYFGQEIFNAGVLLVNNAFWKKENMTQKLIDVTNEWHDKVDQADQSILNMLFEHKWLELDFDYNHIVIHKQFADYQLPEGQDYPAIIHYLSHRKPWKDLAAQTYREVWWYYHGLEWTELGQNHHLHPLQRSHIYPIKEPFTCLIYTASDHIEQIETLVQSLPDIQFKIAARVIVSDRLAQMTIYPNVTIFNGIHYLVDVDNELVETSQVLLDINHGEKTEEILDQFANLGKPILSFENTKTYEVGQEAYAVDQVQAMIEKLREISK</sequence>
<organism>
    <name type="scientific">Streptococcus pneumoniae serotype 4 (strain ATCC BAA-334 / TIGR4)</name>
    <dbReference type="NCBI Taxonomy" id="170187"/>
    <lineage>
        <taxon>Bacteria</taxon>
        <taxon>Bacillati</taxon>
        <taxon>Bacillota</taxon>
        <taxon>Bacilli</taxon>
        <taxon>Lactobacillales</taxon>
        <taxon>Streptococcaceae</taxon>
        <taxon>Streptococcus</taxon>
    </lineage>
</organism>
<evidence type="ECO:0000250" key="1">
    <source>
        <dbReference type="UniProtKB" id="A0A0H2URJ6"/>
    </source>
</evidence>
<evidence type="ECO:0000269" key="2">
    <source>
    </source>
</evidence>
<evidence type="ECO:0000303" key="3">
    <source>
    </source>
</evidence>
<evidence type="ECO:0000303" key="4">
    <source>
    </source>
</evidence>
<evidence type="ECO:0000303" key="5">
    <source>
    </source>
</evidence>
<evidence type="ECO:0000305" key="6"/>
<evidence type="ECO:0000305" key="7">
    <source>
    </source>
</evidence>
<keyword id="KW-0328">Glycosyltransferase</keyword>
<keyword id="KW-0464">Manganese</keyword>
<keyword id="KW-0479">Metal-binding</keyword>
<keyword id="KW-0547">Nucleotide-binding</keyword>
<keyword id="KW-1185">Reference proteome</keyword>
<keyword id="KW-0808">Transferase</keyword>
<proteinExistence type="inferred from homology"/>
<gene>
    <name evidence="5" type="primary">glyA</name>
    <name type="ordered locus">SP_1771</name>
</gene>
<accession>A0A0H2URH7</accession>